<gene>
    <name evidence="1" type="primary">rpsO</name>
    <name type="ordered locus">gbs0197</name>
</gene>
<reference key="1">
    <citation type="journal article" date="2002" name="Mol. Microbiol.">
        <title>Genome sequence of Streptococcus agalactiae, a pathogen causing invasive neonatal disease.</title>
        <authorList>
            <person name="Glaser P."/>
            <person name="Rusniok C."/>
            <person name="Buchrieser C."/>
            <person name="Chevalier F."/>
            <person name="Frangeul L."/>
            <person name="Msadek T."/>
            <person name="Zouine M."/>
            <person name="Couve E."/>
            <person name="Lalioui L."/>
            <person name="Poyart C."/>
            <person name="Trieu-Cuot P."/>
            <person name="Kunst F."/>
        </authorList>
    </citation>
    <scope>NUCLEOTIDE SEQUENCE [LARGE SCALE GENOMIC DNA]</scope>
    <source>
        <strain>NEM316</strain>
    </source>
</reference>
<dbReference type="EMBL" id="AL766844">
    <property type="protein sequence ID" value="CAD45842.1"/>
    <property type="molecule type" value="Genomic_DNA"/>
</dbReference>
<dbReference type="RefSeq" id="WP_001018249.1">
    <property type="nucleotide sequence ID" value="NC_004368.1"/>
</dbReference>
<dbReference type="SMR" id="Q8E7F7"/>
<dbReference type="GeneID" id="66885178"/>
<dbReference type="KEGG" id="san:rpsO"/>
<dbReference type="eggNOG" id="COG0184">
    <property type="taxonomic scope" value="Bacteria"/>
</dbReference>
<dbReference type="HOGENOM" id="CLU_148518_0_0_9"/>
<dbReference type="Proteomes" id="UP000000823">
    <property type="component" value="Chromosome"/>
</dbReference>
<dbReference type="GO" id="GO:0022627">
    <property type="term" value="C:cytosolic small ribosomal subunit"/>
    <property type="evidence" value="ECO:0007669"/>
    <property type="project" value="TreeGrafter"/>
</dbReference>
<dbReference type="GO" id="GO:0019843">
    <property type="term" value="F:rRNA binding"/>
    <property type="evidence" value="ECO:0007669"/>
    <property type="project" value="UniProtKB-UniRule"/>
</dbReference>
<dbReference type="GO" id="GO:0003735">
    <property type="term" value="F:structural constituent of ribosome"/>
    <property type="evidence" value="ECO:0007669"/>
    <property type="project" value="InterPro"/>
</dbReference>
<dbReference type="GO" id="GO:0006412">
    <property type="term" value="P:translation"/>
    <property type="evidence" value="ECO:0007669"/>
    <property type="project" value="UniProtKB-UniRule"/>
</dbReference>
<dbReference type="CDD" id="cd00353">
    <property type="entry name" value="Ribosomal_S15p_S13e"/>
    <property type="match status" value="1"/>
</dbReference>
<dbReference type="FunFam" id="1.10.287.10:FF:000002">
    <property type="entry name" value="30S ribosomal protein S15"/>
    <property type="match status" value="1"/>
</dbReference>
<dbReference type="Gene3D" id="6.10.250.3130">
    <property type="match status" value="1"/>
</dbReference>
<dbReference type="Gene3D" id="1.10.287.10">
    <property type="entry name" value="S15/NS1, RNA-binding"/>
    <property type="match status" value="1"/>
</dbReference>
<dbReference type="HAMAP" id="MF_01343_B">
    <property type="entry name" value="Ribosomal_uS15_B"/>
    <property type="match status" value="1"/>
</dbReference>
<dbReference type="InterPro" id="IPR000589">
    <property type="entry name" value="Ribosomal_uS15"/>
</dbReference>
<dbReference type="InterPro" id="IPR005290">
    <property type="entry name" value="Ribosomal_uS15_bac-type"/>
</dbReference>
<dbReference type="InterPro" id="IPR009068">
    <property type="entry name" value="uS15_NS1_RNA-bd_sf"/>
</dbReference>
<dbReference type="NCBIfam" id="TIGR00952">
    <property type="entry name" value="S15_bact"/>
    <property type="match status" value="1"/>
</dbReference>
<dbReference type="PANTHER" id="PTHR23321">
    <property type="entry name" value="RIBOSOMAL PROTEIN S15, BACTERIAL AND ORGANELLAR"/>
    <property type="match status" value="1"/>
</dbReference>
<dbReference type="PANTHER" id="PTHR23321:SF26">
    <property type="entry name" value="SMALL RIBOSOMAL SUBUNIT PROTEIN US15M"/>
    <property type="match status" value="1"/>
</dbReference>
<dbReference type="Pfam" id="PF00312">
    <property type="entry name" value="Ribosomal_S15"/>
    <property type="match status" value="1"/>
</dbReference>
<dbReference type="SMART" id="SM01387">
    <property type="entry name" value="Ribosomal_S15"/>
    <property type="match status" value="1"/>
</dbReference>
<dbReference type="SUPFAM" id="SSF47060">
    <property type="entry name" value="S15/NS1 RNA-binding domain"/>
    <property type="match status" value="1"/>
</dbReference>
<dbReference type="PROSITE" id="PS00362">
    <property type="entry name" value="RIBOSOMAL_S15"/>
    <property type="match status" value="1"/>
</dbReference>
<protein>
    <recommendedName>
        <fullName evidence="1">Small ribosomal subunit protein uS15</fullName>
    </recommendedName>
    <alternativeName>
        <fullName evidence="2">30S ribosomal protein S15</fullName>
    </alternativeName>
</protein>
<sequence>MAISKEKKNEIIAQYARHEGDTGSVEVQVAVLTWEINHLNDHIKQHKKDHATYRGLMKKIGHRRNLLAYLRRTDVNRYRELIQSLGLRR</sequence>
<accession>Q8E7F7</accession>
<organism>
    <name type="scientific">Streptococcus agalactiae serotype III (strain NEM316)</name>
    <dbReference type="NCBI Taxonomy" id="211110"/>
    <lineage>
        <taxon>Bacteria</taxon>
        <taxon>Bacillati</taxon>
        <taxon>Bacillota</taxon>
        <taxon>Bacilli</taxon>
        <taxon>Lactobacillales</taxon>
        <taxon>Streptococcaceae</taxon>
        <taxon>Streptococcus</taxon>
    </lineage>
</organism>
<keyword id="KW-0687">Ribonucleoprotein</keyword>
<keyword id="KW-0689">Ribosomal protein</keyword>
<keyword id="KW-0694">RNA-binding</keyword>
<keyword id="KW-0699">rRNA-binding</keyword>
<comment type="function">
    <text evidence="1">One of the primary rRNA binding proteins, it binds directly to 16S rRNA where it helps nucleate assembly of the platform of the 30S subunit by binding and bridging several RNA helices of the 16S rRNA.</text>
</comment>
<comment type="function">
    <text evidence="1">Forms an intersubunit bridge (bridge B4) with the 23S rRNA of the 50S subunit in the ribosome.</text>
</comment>
<comment type="subunit">
    <text evidence="1">Part of the 30S ribosomal subunit. Forms a bridge to the 50S subunit in the 70S ribosome, contacting the 23S rRNA.</text>
</comment>
<comment type="similarity">
    <text evidence="1">Belongs to the universal ribosomal protein uS15 family.</text>
</comment>
<evidence type="ECO:0000255" key="1">
    <source>
        <dbReference type="HAMAP-Rule" id="MF_01343"/>
    </source>
</evidence>
<evidence type="ECO:0000305" key="2"/>
<name>RS15_STRA3</name>
<proteinExistence type="inferred from homology"/>
<feature type="chain" id="PRO_0000115550" description="Small ribosomal subunit protein uS15">
    <location>
        <begin position="1"/>
        <end position="89"/>
    </location>
</feature>